<dbReference type="EC" id="1.3.3.3" evidence="1"/>
<dbReference type="EMBL" id="CP000050">
    <property type="protein sequence ID" value="AAY51147.1"/>
    <property type="molecule type" value="Genomic_DNA"/>
</dbReference>
<dbReference type="RefSeq" id="WP_011039090.1">
    <property type="nucleotide sequence ID" value="NZ_CP155948.1"/>
</dbReference>
<dbReference type="SMR" id="Q4UP76"/>
<dbReference type="GeneID" id="58015328"/>
<dbReference type="KEGG" id="xcb:XC_4108"/>
<dbReference type="HOGENOM" id="CLU_026169_0_1_6"/>
<dbReference type="UniPathway" id="UPA00251">
    <property type="reaction ID" value="UER00322"/>
</dbReference>
<dbReference type="Proteomes" id="UP000000420">
    <property type="component" value="Chromosome"/>
</dbReference>
<dbReference type="GO" id="GO:0005737">
    <property type="term" value="C:cytoplasm"/>
    <property type="evidence" value="ECO:0007669"/>
    <property type="project" value="UniProtKB-SubCell"/>
</dbReference>
<dbReference type="GO" id="GO:0004109">
    <property type="term" value="F:coproporphyrinogen oxidase activity"/>
    <property type="evidence" value="ECO:0007669"/>
    <property type="project" value="UniProtKB-UniRule"/>
</dbReference>
<dbReference type="GO" id="GO:0046872">
    <property type="term" value="F:metal ion binding"/>
    <property type="evidence" value="ECO:0007669"/>
    <property type="project" value="UniProtKB-KW"/>
</dbReference>
<dbReference type="GO" id="GO:0042803">
    <property type="term" value="F:protein homodimerization activity"/>
    <property type="evidence" value="ECO:0000250"/>
    <property type="project" value="UniProtKB"/>
</dbReference>
<dbReference type="GO" id="GO:0006782">
    <property type="term" value="P:protoporphyrinogen IX biosynthetic process"/>
    <property type="evidence" value="ECO:0007669"/>
    <property type="project" value="UniProtKB-UniRule"/>
</dbReference>
<dbReference type="FunFam" id="3.40.1500.10:FF:000001">
    <property type="entry name" value="Oxygen-dependent coproporphyrinogen-III oxidase"/>
    <property type="match status" value="1"/>
</dbReference>
<dbReference type="Gene3D" id="3.40.1500.10">
    <property type="entry name" value="Coproporphyrinogen III oxidase, aerobic"/>
    <property type="match status" value="1"/>
</dbReference>
<dbReference type="HAMAP" id="MF_00333">
    <property type="entry name" value="Coprogen_oxidas"/>
    <property type="match status" value="1"/>
</dbReference>
<dbReference type="InterPro" id="IPR001260">
    <property type="entry name" value="Coprogen_oxidase_aer"/>
</dbReference>
<dbReference type="InterPro" id="IPR036406">
    <property type="entry name" value="Coprogen_oxidase_aer_sf"/>
</dbReference>
<dbReference type="InterPro" id="IPR018375">
    <property type="entry name" value="Coprogen_oxidase_CS"/>
</dbReference>
<dbReference type="NCBIfam" id="NF003727">
    <property type="entry name" value="PRK05330.1"/>
    <property type="match status" value="1"/>
</dbReference>
<dbReference type="PANTHER" id="PTHR10755">
    <property type="entry name" value="COPROPORPHYRINOGEN III OXIDASE, MITOCHONDRIAL"/>
    <property type="match status" value="1"/>
</dbReference>
<dbReference type="PANTHER" id="PTHR10755:SF0">
    <property type="entry name" value="OXYGEN-DEPENDENT COPROPORPHYRINOGEN-III OXIDASE, MITOCHONDRIAL"/>
    <property type="match status" value="1"/>
</dbReference>
<dbReference type="Pfam" id="PF01218">
    <property type="entry name" value="Coprogen_oxidas"/>
    <property type="match status" value="1"/>
</dbReference>
<dbReference type="PIRSF" id="PIRSF000166">
    <property type="entry name" value="Coproporphyri_ox"/>
    <property type="match status" value="1"/>
</dbReference>
<dbReference type="PRINTS" id="PR00073">
    <property type="entry name" value="COPRGNOXDASE"/>
</dbReference>
<dbReference type="SUPFAM" id="SSF102886">
    <property type="entry name" value="Coproporphyrinogen III oxidase"/>
    <property type="match status" value="1"/>
</dbReference>
<dbReference type="PROSITE" id="PS01021">
    <property type="entry name" value="COPROGEN_OXIDASE"/>
    <property type="match status" value="1"/>
</dbReference>
<keyword id="KW-0963">Cytoplasm</keyword>
<keyword id="KW-0350">Heme biosynthesis</keyword>
<keyword id="KW-0479">Metal-binding</keyword>
<keyword id="KW-0560">Oxidoreductase</keyword>
<keyword id="KW-0627">Porphyrin biosynthesis</keyword>
<sequence>MNEFDRVRDYLTDLQDRICAAVEAIDGKARFAEDLWQRAEGGGGRTRILRDGAVFEQAGIGFSDVSGARLPPSASAHRPELAGATWRACGVSLVFHPHNPHIPTTHANVRYFRAERDGEMVAAWFGGGFDLTPFYPVDEDVMHWHRTAQALCAPFGEERYAAHKRWCDEYFFLRHRNETRGVGGLFFDDLGQDFERDFAYQRAVGDGFLDAYLPIVERRKDTPYGEAERAFQLYRRGRYVEFNLVYDRGTLFGLQSGGRAESILMSLPPQVRWEYGFQPQPGSAEARLADYLIPRDWLG</sequence>
<reference key="1">
    <citation type="journal article" date="2005" name="Genome Res.">
        <title>Comparative and functional genomic analyses of the pathogenicity of phytopathogen Xanthomonas campestris pv. campestris.</title>
        <authorList>
            <person name="Qian W."/>
            <person name="Jia Y."/>
            <person name="Ren S.-X."/>
            <person name="He Y.-Q."/>
            <person name="Feng J.-X."/>
            <person name="Lu L.-F."/>
            <person name="Sun Q."/>
            <person name="Ying G."/>
            <person name="Tang D.-J."/>
            <person name="Tang H."/>
            <person name="Wu W."/>
            <person name="Hao P."/>
            <person name="Wang L."/>
            <person name="Jiang B.-L."/>
            <person name="Zeng S."/>
            <person name="Gu W.-Y."/>
            <person name="Lu G."/>
            <person name="Rong L."/>
            <person name="Tian Y."/>
            <person name="Yao Z."/>
            <person name="Fu G."/>
            <person name="Chen B."/>
            <person name="Fang R."/>
            <person name="Qiang B."/>
            <person name="Chen Z."/>
            <person name="Zhao G.-P."/>
            <person name="Tang J.-L."/>
            <person name="He C."/>
        </authorList>
    </citation>
    <scope>NUCLEOTIDE SEQUENCE [LARGE SCALE GENOMIC DNA]</scope>
    <source>
        <strain>8004</strain>
    </source>
</reference>
<accession>Q4UP76</accession>
<protein>
    <recommendedName>
        <fullName evidence="1">Oxygen-dependent coproporphyrinogen-III oxidase</fullName>
        <shortName evidence="1">CPO</shortName>
        <shortName evidence="1">Coprogen oxidase</shortName>
        <shortName evidence="1">Coproporphyrinogenase</shortName>
        <ecNumber evidence="1">1.3.3.3</ecNumber>
    </recommendedName>
</protein>
<gene>
    <name evidence="1" type="primary">hemF</name>
    <name type="ordered locus">XC_4108</name>
</gene>
<comment type="function">
    <text evidence="1">Involved in the heme biosynthesis. Catalyzes the aerobic oxidative decarboxylation of propionate groups of rings A and B of coproporphyrinogen-III to yield the vinyl groups in protoporphyrinogen-IX.</text>
</comment>
<comment type="catalytic activity">
    <reaction evidence="1">
        <text>coproporphyrinogen III + O2 + 2 H(+) = protoporphyrinogen IX + 2 CO2 + 2 H2O</text>
        <dbReference type="Rhea" id="RHEA:18257"/>
        <dbReference type="ChEBI" id="CHEBI:15377"/>
        <dbReference type="ChEBI" id="CHEBI:15378"/>
        <dbReference type="ChEBI" id="CHEBI:15379"/>
        <dbReference type="ChEBI" id="CHEBI:16526"/>
        <dbReference type="ChEBI" id="CHEBI:57307"/>
        <dbReference type="ChEBI" id="CHEBI:57309"/>
        <dbReference type="EC" id="1.3.3.3"/>
    </reaction>
</comment>
<comment type="cofactor">
    <cofactor evidence="1">
        <name>a divalent metal cation</name>
        <dbReference type="ChEBI" id="CHEBI:60240"/>
    </cofactor>
</comment>
<comment type="pathway">
    <text evidence="1">Porphyrin-containing compound metabolism; protoporphyrin-IX biosynthesis; protoporphyrinogen-IX from coproporphyrinogen-III (O2 route): step 1/1.</text>
</comment>
<comment type="subunit">
    <text evidence="1">Homodimer.</text>
</comment>
<comment type="subcellular location">
    <subcellularLocation>
        <location evidence="1">Cytoplasm</location>
    </subcellularLocation>
</comment>
<comment type="similarity">
    <text evidence="1">Belongs to the aerobic coproporphyrinogen-III oxidase family.</text>
</comment>
<evidence type="ECO:0000255" key="1">
    <source>
        <dbReference type="HAMAP-Rule" id="MF_00333"/>
    </source>
</evidence>
<feature type="chain" id="PRO_1000019513" description="Oxygen-dependent coproporphyrinogen-III oxidase">
    <location>
        <begin position="1"/>
        <end position="299"/>
    </location>
</feature>
<feature type="region of interest" description="Important for dimerization" evidence="1">
    <location>
        <begin position="239"/>
        <end position="274"/>
    </location>
</feature>
<feature type="active site" description="Proton donor" evidence="1">
    <location>
        <position position="106"/>
    </location>
</feature>
<feature type="binding site" evidence="1">
    <location>
        <position position="92"/>
    </location>
    <ligand>
        <name>substrate</name>
    </ligand>
</feature>
<feature type="binding site" evidence="1">
    <location>
        <position position="96"/>
    </location>
    <ligand>
        <name>a divalent metal cation</name>
        <dbReference type="ChEBI" id="CHEBI:60240"/>
    </ligand>
</feature>
<feature type="binding site" evidence="1">
    <location>
        <position position="106"/>
    </location>
    <ligand>
        <name>a divalent metal cation</name>
        <dbReference type="ChEBI" id="CHEBI:60240"/>
    </ligand>
</feature>
<feature type="binding site" evidence="1">
    <location>
        <begin position="108"/>
        <end position="110"/>
    </location>
    <ligand>
        <name>substrate</name>
    </ligand>
</feature>
<feature type="binding site" evidence="1">
    <location>
        <position position="145"/>
    </location>
    <ligand>
        <name>a divalent metal cation</name>
        <dbReference type="ChEBI" id="CHEBI:60240"/>
    </ligand>
</feature>
<feature type="binding site" evidence="1">
    <location>
        <position position="175"/>
    </location>
    <ligand>
        <name>a divalent metal cation</name>
        <dbReference type="ChEBI" id="CHEBI:60240"/>
    </ligand>
</feature>
<feature type="binding site" evidence="1">
    <location>
        <begin position="257"/>
        <end position="259"/>
    </location>
    <ligand>
        <name>substrate</name>
    </ligand>
</feature>
<feature type="site" description="Important for dimerization" evidence="1">
    <location>
        <position position="175"/>
    </location>
</feature>
<proteinExistence type="inferred from homology"/>
<name>HEM6_XANC8</name>
<organism>
    <name type="scientific">Xanthomonas campestris pv. campestris (strain 8004)</name>
    <dbReference type="NCBI Taxonomy" id="314565"/>
    <lineage>
        <taxon>Bacteria</taxon>
        <taxon>Pseudomonadati</taxon>
        <taxon>Pseudomonadota</taxon>
        <taxon>Gammaproteobacteria</taxon>
        <taxon>Lysobacterales</taxon>
        <taxon>Lysobacteraceae</taxon>
        <taxon>Xanthomonas</taxon>
    </lineage>
</organism>